<accession>P17689</accession>
<name>HBA_MARFO</name>
<feature type="chain" id="PRO_0000052685" description="Hemoglobin subunit alpha">
    <location>
        <begin position="1"/>
        <end position="141"/>
    </location>
</feature>
<feature type="peptide" id="PRO_0000455899" description="Hemopressin" evidence="2">
    <location>
        <begin position="95"/>
        <end position="103"/>
    </location>
</feature>
<feature type="domain" description="Globin" evidence="4">
    <location>
        <begin position="1"/>
        <end position="141"/>
    </location>
</feature>
<feature type="binding site" evidence="4">
    <location>
        <position position="58"/>
    </location>
    <ligand>
        <name>O2</name>
        <dbReference type="ChEBI" id="CHEBI:15379"/>
    </ligand>
</feature>
<feature type="binding site" description="proximal binding residue" evidence="4">
    <location>
        <position position="87"/>
    </location>
    <ligand>
        <name>heme b</name>
        <dbReference type="ChEBI" id="CHEBI:60344"/>
    </ligand>
    <ligandPart>
        <name>Fe</name>
        <dbReference type="ChEBI" id="CHEBI:18248"/>
    </ligandPart>
</feature>
<feature type="modified residue" description="Phosphoserine" evidence="3">
    <location>
        <position position="3"/>
    </location>
</feature>
<feature type="modified residue" description="N6-succinyllysine" evidence="1">
    <location>
        <position position="7"/>
    </location>
</feature>
<feature type="modified residue" description="Phosphothreonine" evidence="3">
    <location>
        <position position="8"/>
    </location>
</feature>
<feature type="modified residue" description="N6-succinyllysine" evidence="1">
    <location>
        <position position="11"/>
    </location>
</feature>
<feature type="modified residue" description="N6-acetyllysine; alternate" evidence="3">
    <location>
        <position position="16"/>
    </location>
</feature>
<feature type="modified residue" description="N6-succinyllysine; alternate" evidence="1">
    <location>
        <position position="16"/>
    </location>
</feature>
<feature type="modified residue" description="Phosphotyrosine" evidence="3">
    <location>
        <position position="24"/>
    </location>
</feature>
<feature type="modified residue" description="Phosphoserine" evidence="3">
    <location>
        <position position="35"/>
    </location>
</feature>
<feature type="modified residue" description="N6-succinyllysine" evidence="1">
    <location>
        <position position="40"/>
    </location>
</feature>
<feature type="modified residue" description="Phosphoserine" evidence="3">
    <location>
        <position position="49"/>
    </location>
</feature>
<feature type="modified residue" description="Phosphoserine" evidence="1">
    <location>
        <position position="102"/>
    </location>
</feature>
<feature type="modified residue" description="Phosphothreonine" evidence="1">
    <location>
        <position position="108"/>
    </location>
</feature>
<feature type="modified residue" description="Phosphoserine" evidence="1">
    <location>
        <position position="124"/>
    </location>
</feature>
<feature type="modified residue" description="Phosphothreonine" evidence="1">
    <location>
        <position position="134"/>
    </location>
</feature>
<feature type="modified residue" description="Phosphothreonine" evidence="1">
    <location>
        <position position="137"/>
    </location>
</feature>
<feature type="modified residue" description="Phosphoserine" evidence="1">
    <location>
        <position position="138"/>
    </location>
</feature>
<keyword id="KW-0007">Acetylation</keyword>
<keyword id="KW-0903">Direct protein sequencing</keyword>
<keyword id="KW-0349">Heme</keyword>
<keyword id="KW-0408">Iron</keyword>
<keyword id="KW-0479">Metal-binding</keyword>
<keyword id="KW-0561">Oxygen transport</keyword>
<keyword id="KW-0597">Phosphoprotein</keyword>
<keyword id="KW-0813">Transport</keyword>
<dbReference type="PIR" id="S10598">
    <property type="entry name" value="HABDBM"/>
</dbReference>
<dbReference type="SMR" id="P17689"/>
<dbReference type="GO" id="GO:0072562">
    <property type="term" value="C:blood microparticle"/>
    <property type="evidence" value="ECO:0007669"/>
    <property type="project" value="TreeGrafter"/>
</dbReference>
<dbReference type="GO" id="GO:0031838">
    <property type="term" value="C:haptoglobin-hemoglobin complex"/>
    <property type="evidence" value="ECO:0007669"/>
    <property type="project" value="TreeGrafter"/>
</dbReference>
<dbReference type="GO" id="GO:0005833">
    <property type="term" value="C:hemoglobin complex"/>
    <property type="evidence" value="ECO:0007669"/>
    <property type="project" value="InterPro"/>
</dbReference>
<dbReference type="GO" id="GO:0031720">
    <property type="term" value="F:haptoglobin binding"/>
    <property type="evidence" value="ECO:0007669"/>
    <property type="project" value="TreeGrafter"/>
</dbReference>
<dbReference type="GO" id="GO:0020037">
    <property type="term" value="F:heme binding"/>
    <property type="evidence" value="ECO:0007669"/>
    <property type="project" value="InterPro"/>
</dbReference>
<dbReference type="GO" id="GO:0005506">
    <property type="term" value="F:iron ion binding"/>
    <property type="evidence" value="ECO:0007669"/>
    <property type="project" value="InterPro"/>
</dbReference>
<dbReference type="GO" id="GO:0043177">
    <property type="term" value="F:organic acid binding"/>
    <property type="evidence" value="ECO:0007669"/>
    <property type="project" value="TreeGrafter"/>
</dbReference>
<dbReference type="GO" id="GO:0019825">
    <property type="term" value="F:oxygen binding"/>
    <property type="evidence" value="ECO:0007669"/>
    <property type="project" value="InterPro"/>
</dbReference>
<dbReference type="GO" id="GO:0005344">
    <property type="term" value="F:oxygen carrier activity"/>
    <property type="evidence" value="ECO:0007669"/>
    <property type="project" value="UniProtKB-KW"/>
</dbReference>
<dbReference type="GO" id="GO:0004601">
    <property type="term" value="F:peroxidase activity"/>
    <property type="evidence" value="ECO:0007669"/>
    <property type="project" value="TreeGrafter"/>
</dbReference>
<dbReference type="GO" id="GO:0042744">
    <property type="term" value="P:hydrogen peroxide catabolic process"/>
    <property type="evidence" value="ECO:0007669"/>
    <property type="project" value="TreeGrafter"/>
</dbReference>
<dbReference type="CDD" id="cd08927">
    <property type="entry name" value="Hb-alpha-like"/>
    <property type="match status" value="1"/>
</dbReference>
<dbReference type="FunFam" id="1.10.490.10:FF:000002">
    <property type="entry name" value="Hemoglobin subunit alpha"/>
    <property type="match status" value="1"/>
</dbReference>
<dbReference type="Gene3D" id="1.10.490.10">
    <property type="entry name" value="Globins"/>
    <property type="match status" value="1"/>
</dbReference>
<dbReference type="InterPro" id="IPR000971">
    <property type="entry name" value="Globin"/>
</dbReference>
<dbReference type="InterPro" id="IPR009050">
    <property type="entry name" value="Globin-like_sf"/>
</dbReference>
<dbReference type="InterPro" id="IPR012292">
    <property type="entry name" value="Globin/Proto"/>
</dbReference>
<dbReference type="InterPro" id="IPR002338">
    <property type="entry name" value="Hemoglobin_a-typ"/>
</dbReference>
<dbReference type="InterPro" id="IPR050056">
    <property type="entry name" value="Hemoglobin_oxygen_transport"/>
</dbReference>
<dbReference type="InterPro" id="IPR002339">
    <property type="entry name" value="Hemoglobin_pi"/>
</dbReference>
<dbReference type="PANTHER" id="PTHR11442">
    <property type="entry name" value="HEMOGLOBIN FAMILY MEMBER"/>
    <property type="match status" value="1"/>
</dbReference>
<dbReference type="PANTHER" id="PTHR11442:SF48">
    <property type="entry name" value="HEMOGLOBIN SUBUNIT ALPHA"/>
    <property type="match status" value="1"/>
</dbReference>
<dbReference type="Pfam" id="PF00042">
    <property type="entry name" value="Globin"/>
    <property type="match status" value="1"/>
</dbReference>
<dbReference type="PRINTS" id="PR00612">
    <property type="entry name" value="ALPHAHAEM"/>
</dbReference>
<dbReference type="PRINTS" id="PR00815">
    <property type="entry name" value="PIHAEM"/>
</dbReference>
<dbReference type="SUPFAM" id="SSF46458">
    <property type="entry name" value="Globin-like"/>
    <property type="match status" value="1"/>
</dbReference>
<dbReference type="PROSITE" id="PS01033">
    <property type="entry name" value="GLOBIN"/>
    <property type="match status" value="1"/>
</dbReference>
<organism>
    <name type="scientific">Martes foina</name>
    <name type="common">Beech marten</name>
    <dbReference type="NCBI Taxonomy" id="9659"/>
    <lineage>
        <taxon>Eukaryota</taxon>
        <taxon>Metazoa</taxon>
        <taxon>Chordata</taxon>
        <taxon>Craniata</taxon>
        <taxon>Vertebrata</taxon>
        <taxon>Euteleostomi</taxon>
        <taxon>Mammalia</taxon>
        <taxon>Eutheria</taxon>
        <taxon>Laurasiatheria</taxon>
        <taxon>Carnivora</taxon>
        <taxon>Caniformia</taxon>
        <taxon>Musteloidea</taxon>
        <taxon>Mustelidae</taxon>
        <taxon>Guloninae</taxon>
        <taxon>Martes</taxon>
    </lineage>
</organism>
<gene>
    <name type="primary">HBA</name>
</gene>
<comment type="function">
    <text>Involved in oxygen transport from the lung to the various peripheral tissues.</text>
</comment>
<comment type="function">
    <molecule>Hemopressin</molecule>
    <text evidence="2">Hemopressin acts as an antagonist peptide of the cannabinoid receptor CNR1. Hemopressin-binding efficiently blocks cannabinoid receptor CNR1 and subsequent signaling.</text>
</comment>
<comment type="subunit">
    <text>Heterotetramer of two alpha chains and two beta chains.</text>
</comment>
<comment type="tissue specificity">
    <text>Red blood cells.</text>
</comment>
<comment type="similarity">
    <text evidence="4">Belongs to the globin family.</text>
</comment>
<reference key="1">
    <citation type="journal article" date="1990" name="Biol. Chem. Hoppe-Seyler">
        <title>Carnivora: the primary structure of the beach marten (Martes foina, Mustelidae) hemoglobin.</title>
        <authorList>
            <person name="Ruecknagel K.P."/>
            <person name="Wiesner H."/>
            <person name="Braunitzer G."/>
        </authorList>
    </citation>
    <scope>PROTEIN SEQUENCE</scope>
</reference>
<protein>
    <recommendedName>
        <fullName>Hemoglobin subunit alpha</fullName>
    </recommendedName>
    <alternativeName>
        <fullName>Alpha-globin</fullName>
    </alternativeName>
    <alternativeName>
        <fullName>Hemoglobin alpha chain</fullName>
    </alternativeName>
    <component>
        <recommendedName>
            <fullName evidence="2">Hemopressin</fullName>
        </recommendedName>
    </component>
</protein>
<evidence type="ECO:0000250" key="1">
    <source>
        <dbReference type="UniProtKB" id="P01942"/>
    </source>
</evidence>
<evidence type="ECO:0000250" key="2">
    <source>
        <dbReference type="UniProtKB" id="P01946"/>
    </source>
</evidence>
<evidence type="ECO:0000250" key="3">
    <source>
        <dbReference type="UniProtKB" id="P69905"/>
    </source>
</evidence>
<evidence type="ECO:0000255" key="4">
    <source>
        <dbReference type="PROSITE-ProRule" id="PRU00238"/>
    </source>
</evidence>
<proteinExistence type="evidence at protein level"/>
<sequence>VLSPADKTNVKSTWDKIGGHAGEYGGEALERTFVSFPTTKTYFPHFDLSPGSAQVKAHGKKVADALTLAVGHLDDLAGALSALSDLHAHKLRVDPVNFKLLSHCLLVTLACHHPAEFTPAVHASLDKFFSTVSTVLTSKYR</sequence>